<feature type="chain" id="PRO_1000008520" description="Holo-[acyl-carrier-protein] synthase">
    <location>
        <begin position="1"/>
        <end position="128"/>
    </location>
</feature>
<feature type="binding site" evidence="1">
    <location>
        <position position="8"/>
    </location>
    <ligand>
        <name>Mg(2+)</name>
        <dbReference type="ChEBI" id="CHEBI:18420"/>
    </ligand>
</feature>
<feature type="binding site" evidence="1">
    <location>
        <position position="57"/>
    </location>
    <ligand>
        <name>Mg(2+)</name>
        <dbReference type="ChEBI" id="CHEBI:18420"/>
    </ligand>
</feature>
<sequence length="128" mass="14165">MVHGTGIDLVDIDRLEKILMKWDMSFLKKVFSPAEIEYCAKRAFPAIHYAARFAAKESFLKSLGMGIGMGIPLKDIEVRNDPLGRPVLNLYGKALEILEKRGITTVHVSLSHSRSQAGAVVILEGLKD</sequence>
<organism>
    <name type="scientific">Syntrophus aciditrophicus (strain SB)</name>
    <dbReference type="NCBI Taxonomy" id="56780"/>
    <lineage>
        <taxon>Bacteria</taxon>
        <taxon>Pseudomonadati</taxon>
        <taxon>Thermodesulfobacteriota</taxon>
        <taxon>Syntrophia</taxon>
        <taxon>Syntrophales</taxon>
        <taxon>Syntrophaceae</taxon>
        <taxon>Syntrophus</taxon>
    </lineage>
</organism>
<accession>Q2LTJ7</accession>
<keyword id="KW-0963">Cytoplasm</keyword>
<keyword id="KW-0275">Fatty acid biosynthesis</keyword>
<keyword id="KW-0276">Fatty acid metabolism</keyword>
<keyword id="KW-0444">Lipid biosynthesis</keyword>
<keyword id="KW-0443">Lipid metabolism</keyword>
<keyword id="KW-0460">Magnesium</keyword>
<keyword id="KW-0479">Metal-binding</keyword>
<keyword id="KW-1185">Reference proteome</keyword>
<keyword id="KW-0808">Transferase</keyword>
<gene>
    <name evidence="1" type="primary">acpS</name>
    <name type="ordered locus">SYNAS_15290</name>
    <name type="ORF">SYN_02779</name>
</gene>
<protein>
    <recommendedName>
        <fullName evidence="1">Holo-[acyl-carrier-protein] synthase</fullName>
        <shortName evidence="1">Holo-ACP synthase</shortName>
        <ecNumber evidence="1">2.7.8.7</ecNumber>
    </recommendedName>
    <alternativeName>
        <fullName evidence="1">4'-phosphopantetheinyl transferase AcpS</fullName>
    </alternativeName>
</protein>
<name>ACPS_SYNAS</name>
<dbReference type="EC" id="2.7.8.7" evidence="1"/>
<dbReference type="EMBL" id="CP000252">
    <property type="protein sequence ID" value="ABC77408.1"/>
    <property type="molecule type" value="Genomic_DNA"/>
</dbReference>
<dbReference type="RefSeq" id="WP_011417430.1">
    <property type="nucleotide sequence ID" value="NC_007759.1"/>
</dbReference>
<dbReference type="SMR" id="Q2LTJ7"/>
<dbReference type="FunCoup" id="Q2LTJ7">
    <property type="interactions" value="147"/>
</dbReference>
<dbReference type="STRING" id="56780.SYN_02779"/>
<dbReference type="KEGG" id="sat:SYN_02779"/>
<dbReference type="eggNOG" id="COG0736">
    <property type="taxonomic scope" value="Bacteria"/>
</dbReference>
<dbReference type="HOGENOM" id="CLU_089696_3_1_7"/>
<dbReference type="InParanoid" id="Q2LTJ7"/>
<dbReference type="OrthoDB" id="517356at2"/>
<dbReference type="Proteomes" id="UP000001933">
    <property type="component" value="Chromosome"/>
</dbReference>
<dbReference type="GO" id="GO:0005737">
    <property type="term" value="C:cytoplasm"/>
    <property type="evidence" value="ECO:0007669"/>
    <property type="project" value="UniProtKB-SubCell"/>
</dbReference>
<dbReference type="GO" id="GO:0008897">
    <property type="term" value="F:holo-[acyl-carrier-protein] synthase activity"/>
    <property type="evidence" value="ECO:0007669"/>
    <property type="project" value="UniProtKB-UniRule"/>
</dbReference>
<dbReference type="GO" id="GO:0000287">
    <property type="term" value="F:magnesium ion binding"/>
    <property type="evidence" value="ECO:0007669"/>
    <property type="project" value="UniProtKB-UniRule"/>
</dbReference>
<dbReference type="GO" id="GO:0006633">
    <property type="term" value="P:fatty acid biosynthetic process"/>
    <property type="evidence" value="ECO:0007669"/>
    <property type="project" value="UniProtKB-UniRule"/>
</dbReference>
<dbReference type="Gene3D" id="3.90.470.20">
    <property type="entry name" value="4'-phosphopantetheinyl transferase domain"/>
    <property type="match status" value="1"/>
</dbReference>
<dbReference type="HAMAP" id="MF_00101">
    <property type="entry name" value="AcpS"/>
    <property type="match status" value="1"/>
</dbReference>
<dbReference type="InterPro" id="IPR008278">
    <property type="entry name" value="4-PPantetheinyl_Trfase_dom"/>
</dbReference>
<dbReference type="InterPro" id="IPR037143">
    <property type="entry name" value="4-PPantetheinyl_Trfase_dom_sf"/>
</dbReference>
<dbReference type="InterPro" id="IPR002582">
    <property type="entry name" value="ACPS"/>
</dbReference>
<dbReference type="InterPro" id="IPR004568">
    <property type="entry name" value="Ppantetheine-prot_Trfase_dom"/>
</dbReference>
<dbReference type="NCBIfam" id="TIGR00516">
    <property type="entry name" value="acpS"/>
    <property type="match status" value="1"/>
</dbReference>
<dbReference type="NCBIfam" id="TIGR00556">
    <property type="entry name" value="pantethn_trn"/>
    <property type="match status" value="1"/>
</dbReference>
<dbReference type="Pfam" id="PF01648">
    <property type="entry name" value="ACPS"/>
    <property type="match status" value="1"/>
</dbReference>
<dbReference type="SUPFAM" id="SSF56214">
    <property type="entry name" value="4'-phosphopantetheinyl transferase"/>
    <property type="match status" value="1"/>
</dbReference>
<evidence type="ECO:0000255" key="1">
    <source>
        <dbReference type="HAMAP-Rule" id="MF_00101"/>
    </source>
</evidence>
<reference key="1">
    <citation type="journal article" date="2007" name="Proc. Natl. Acad. Sci. U.S.A.">
        <title>The genome of Syntrophus aciditrophicus: life at the thermodynamic limit of microbial growth.</title>
        <authorList>
            <person name="McInerney M.J."/>
            <person name="Rohlin L."/>
            <person name="Mouttaki H."/>
            <person name="Kim U."/>
            <person name="Krupp R.S."/>
            <person name="Rios-Hernandez L."/>
            <person name="Sieber J."/>
            <person name="Struchtemeyer C.G."/>
            <person name="Bhattacharyya A."/>
            <person name="Campbell J.W."/>
            <person name="Gunsalus R.P."/>
        </authorList>
    </citation>
    <scope>NUCLEOTIDE SEQUENCE [LARGE SCALE GENOMIC DNA]</scope>
    <source>
        <strain>SB</strain>
    </source>
</reference>
<comment type="function">
    <text evidence="1">Transfers the 4'-phosphopantetheine moiety from coenzyme A to a Ser of acyl-carrier-protein.</text>
</comment>
<comment type="catalytic activity">
    <reaction evidence="1">
        <text>apo-[ACP] + CoA = holo-[ACP] + adenosine 3',5'-bisphosphate + H(+)</text>
        <dbReference type="Rhea" id="RHEA:12068"/>
        <dbReference type="Rhea" id="RHEA-COMP:9685"/>
        <dbReference type="Rhea" id="RHEA-COMP:9690"/>
        <dbReference type="ChEBI" id="CHEBI:15378"/>
        <dbReference type="ChEBI" id="CHEBI:29999"/>
        <dbReference type="ChEBI" id="CHEBI:57287"/>
        <dbReference type="ChEBI" id="CHEBI:58343"/>
        <dbReference type="ChEBI" id="CHEBI:64479"/>
        <dbReference type="EC" id="2.7.8.7"/>
    </reaction>
</comment>
<comment type="cofactor">
    <cofactor evidence="1">
        <name>Mg(2+)</name>
        <dbReference type="ChEBI" id="CHEBI:18420"/>
    </cofactor>
</comment>
<comment type="subcellular location">
    <subcellularLocation>
        <location evidence="1">Cytoplasm</location>
    </subcellularLocation>
</comment>
<comment type="similarity">
    <text evidence="1">Belongs to the P-Pant transferase superfamily. AcpS family.</text>
</comment>
<proteinExistence type="inferred from homology"/>